<gene>
    <name evidence="1" type="primary">ilvD</name>
    <name type="ordered locus">HY04AAS1_0217</name>
</gene>
<keyword id="KW-0001">2Fe-2S</keyword>
<keyword id="KW-0028">Amino-acid biosynthesis</keyword>
<keyword id="KW-0100">Branched-chain amino acid biosynthesis</keyword>
<keyword id="KW-0408">Iron</keyword>
<keyword id="KW-0411">Iron-sulfur</keyword>
<keyword id="KW-0456">Lyase</keyword>
<keyword id="KW-0460">Magnesium</keyword>
<keyword id="KW-0479">Metal-binding</keyword>
<sequence length="554" mass="59771">MRSDIIQKGYDKAPHRSLLRACGFKDEDFGKPIIGVANSYIDIVPGHVHLREFVEPIKEEIRKAGAIPVEFNTIGVDDGIAMGHYGMHYSLPSRELIADAIETVVEAHQLDGLICIPNCDKIVPGMLMGALRVNVPTVFISGGPMAAGKIGDKKVDLISVFEGVGKLNKGEITEKDLLVIEQNACPSCGSCSGLFTANSMNCLTEVLGLGLPGNGTTLAIDPRREMLARQAARQVVELVKIDLKPRDIVTKASFDNAFRVDIAMGGSSNTVLHLLAIAREAGIEYKMEDIDKISRETPTLCKISPSSDYHMDDLDRAGGISAIMKELLRNGLFDGKQRTVTTKTIEEIVKDVEIMDENVIRRIDNAYSKDGGLAILFGNLAPKGSVVKTAGVAKEMLQFKGKAICFDSEEEAIEGIRGGKVKPGHVVVIRYEGPKGGPGMREMLSPTSTIMGMGLGSSVALITDGRFSGGTRGACIGHISPEAAAGGPIGIVQDGDEILIDIPNRKLELLISQEEFDARLKAFKPKEKLIKSSWLKRYRKFVKDASEGAILSAD</sequence>
<protein>
    <recommendedName>
        <fullName evidence="1">Dihydroxy-acid dehydratase</fullName>
        <shortName evidence="1">DAD</shortName>
        <ecNumber evidence="1">4.2.1.9</ecNumber>
    </recommendedName>
</protein>
<accession>B4U6Z8</accession>
<proteinExistence type="inferred from homology"/>
<evidence type="ECO:0000255" key="1">
    <source>
        <dbReference type="HAMAP-Rule" id="MF_00012"/>
    </source>
</evidence>
<dbReference type="EC" id="4.2.1.9" evidence="1"/>
<dbReference type="EMBL" id="CP001130">
    <property type="protein sequence ID" value="ACG56909.1"/>
    <property type="molecule type" value="Genomic_DNA"/>
</dbReference>
<dbReference type="RefSeq" id="WP_012513266.1">
    <property type="nucleotide sequence ID" value="NC_011126.1"/>
</dbReference>
<dbReference type="SMR" id="B4U6Z8"/>
<dbReference type="STRING" id="380749.HY04AAS1_0217"/>
<dbReference type="KEGG" id="hya:HY04AAS1_0217"/>
<dbReference type="eggNOG" id="COG0129">
    <property type="taxonomic scope" value="Bacteria"/>
</dbReference>
<dbReference type="HOGENOM" id="CLU_014271_4_2_0"/>
<dbReference type="OrthoDB" id="9807077at2"/>
<dbReference type="UniPathway" id="UPA00047">
    <property type="reaction ID" value="UER00057"/>
</dbReference>
<dbReference type="UniPathway" id="UPA00049">
    <property type="reaction ID" value="UER00061"/>
</dbReference>
<dbReference type="GO" id="GO:0005829">
    <property type="term" value="C:cytosol"/>
    <property type="evidence" value="ECO:0007669"/>
    <property type="project" value="TreeGrafter"/>
</dbReference>
<dbReference type="GO" id="GO:0051537">
    <property type="term" value="F:2 iron, 2 sulfur cluster binding"/>
    <property type="evidence" value="ECO:0007669"/>
    <property type="project" value="UniProtKB-UniRule"/>
</dbReference>
<dbReference type="GO" id="GO:0004160">
    <property type="term" value="F:dihydroxy-acid dehydratase activity"/>
    <property type="evidence" value="ECO:0007669"/>
    <property type="project" value="UniProtKB-UniRule"/>
</dbReference>
<dbReference type="GO" id="GO:0000287">
    <property type="term" value="F:magnesium ion binding"/>
    <property type="evidence" value="ECO:0007669"/>
    <property type="project" value="UniProtKB-UniRule"/>
</dbReference>
<dbReference type="GO" id="GO:0009097">
    <property type="term" value="P:isoleucine biosynthetic process"/>
    <property type="evidence" value="ECO:0007669"/>
    <property type="project" value="UniProtKB-UniRule"/>
</dbReference>
<dbReference type="GO" id="GO:0009099">
    <property type="term" value="P:L-valine biosynthetic process"/>
    <property type="evidence" value="ECO:0007669"/>
    <property type="project" value="UniProtKB-UniRule"/>
</dbReference>
<dbReference type="FunFam" id="3.50.30.80:FF:000001">
    <property type="entry name" value="Dihydroxy-acid dehydratase"/>
    <property type="match status" value="1"/>
</dbReference>
<dbReference type="Gene3D" id="3.50.30.80">
    <property type="entry name" value="IlvD/EDD C-terminal domain-like"/>
    <property type="match status" value="1"/>
</dbReference>
<dbReference type="HAMAP" id="MF_00012">
    <property type="entry name" value="IlvD"/>
    <property type="match status" value="1"/>
</dbReference>
<dbReference type="InterPro" id="IPR042096">
    <property type="entry name" value="Dihydro-acid_dehy_C"/>
</dbReference>
<dbReference type="InterPro" id="IPR004404">
    <property type="entry name" value="DihydroxyA_deHydtase"/>
</dbReference>
<dbReference type="InterPro" id="IPR020558">
    <property type="entry name" value="DiOHA_6PGluconate_deHydtase_CS"/>
</dbReference>
<dbReference type="InterPro" id="IPR056740">
    <property type="entry name" value="ILV_EDD_C"/>
</dbReference>
<dbReference type="InterPro" id="IPR000581">
    <property type="entry name" value="ILV_EDD_N"/>
</dbReference>
<dbReference type="InterPro" id="IPR037237">
    <property type="entry name" value="IlvD/EDD_N"/>
</dbReference>
<dbReference type="NCBIfam" id="TIGR00110">
    <property type="entry name" value="ilvD"/>
    <property type="match status" value="1"/>
</dbReference>
<dbReference type="NCBIfam" id="NF002068">
    <property type="entry name" value="PRK00911.1"/>
    <property type="match status" value="1"/>
</dbReference>
<dbReference type="PANTHER" id="PTHR43661">
    <property type="entry name" value="D-XYLONATE DEHYDRATASE"/>
    <property type="match status" value="1"/>
</dbReference>
<dbReference type="PANTHER" id="PTHR43661:SF3">
    <property type="entry name" value="D-XYLONATE DEHYDRATASE YAGF-RELATED"/>
    <property type="match status" value="1"/>
</dbReference>
<dbReference type="Pfam" id="PF24877">
    <property type="entry name" value="ILV_EDD_C"/>
    <property type="match status" value="1"/>
</dbReference>
<dbReference type="Pfam" id="PF00920">
    <property type="entry name" value="ILVD_EDD_N"/>
    <property type="match status" value="1"/>
</dbReference>
<dbReference type="SUPFAM" id="SSF143975">
    <property type="entry name" value="IlvD/EDD N-terminal domain-like"/>
    <property type="match status" value="1"/>
</dbReference>
<dbReference type="SUPFAM" id="SSF52016">
    <property type="entry name" value="LeuD/IlvD-like"/>
    <property type="match status" value="1"/>
</dbReference>
<dbReference type="PROSITE" id="PS00886">
    <property type="entry name" value="ILVD_EDD_1"/>
    <property type="match status" value="1"/>
</dbReference>
<dbReference type="PROSITE" id="PS00887">
    <property type="entry name" value="ILVD_EDD_2"/>
    <property type="match status" value="1"/>
</dbReference>
<feature type="chain" id="PRO_1000089390" description="Dihydroxy-acid dehydratase">
    <location>
        <begin position="1"/>
        <end position="554"/>
    </location>
</feature>
<feature type="active site" description="Proton acceptor" evidence="1">
    <location>
        <position position="468"/>
    </location>
</feature>
<feature type="binding site" evidence="1">
    <location>
        <position position="78"/>
    </location>
    <ligand>
        <name>Mg(2+)</name>
        <dbReference type="ChEBI" id="CHEBI:18420"/>
    </ligand>
</feature>
<feature type="binding site" evidence="1">
    <location>
        <position position="119"/>
    </location>
    <ligand>
        <name>[2Fe-2S] cluster</name>
        <dbReference type="ChEBI" id="CHEBI:190135"/>
    </ligand>
</feature>
<feature type="binding site" evidence="1">
    <location>
        <position position="120"/>
    </location>
    <ligand>
        <name>Mg(2+)</name>
        <dbReference type="ChEBI" id="CHEBI:18420"/>
    </ligand>
</feature>
<feature type="binding site" description="via carbamate group" evidence="1">
    <location>
        <position position="121"/>
    </location>
    <ligand>
        <name>Mg(2+)</name>
        <dbReference type="ChEBI" id="CHEBI:18420"/>
    </ligand>
</feature>
<feature type="binding site" evidence="1">
    <location>
        <position position="191"/>
    </location>
    <ligand>
        <name>[2Fe-2S] cluster</name>
        <dbReference type="ChEBI" id="CHEBI:190135"/>
    </ligand>
</feature>
<feature type="binding site" evidence="1">
    <location>
        <position position="442"/>
    </location>
    <ligand>
        <name>Mg(2+)</name>
        <dbReference type="ChEBI" id="CHEBI:18420"/>
    </ligand>
</feature>
<feature type="modified residue" description="N6-carboxylysine" evidence="1">
    <location>
        <position position="121"/>
    </location>
</feature>
<name>ILVD_HYDS0</name>
<reference key="1">
    <citation type="journal article" date="2009" name="J. Bacteriol.">
        <title>Complete and draft genome sequences of six members of the Aquificales.</title>
        <authorList>
            <person name="Reysenbach A.-L."/>
            <person name="Hamamura N."/>
            <person name="Podar M."/>
            <person name="Griffiths E."/>
            <person name="Ferreira S."/>
            <person name="Hochstein R."/>
            <person name="Heidelberg J."/>
            <person name="Johnson J."/>
            <person name="Mead D."/>
            <person name="Pohorille A."/>
            <person name="Sarmiento M."/>
            <person name="Schweighofer K."/>
            <person name="Seshadri R."/>
            <person name="Voytek M.A."/>
        </authorList>
    </citation>
    <scope>NUCLEOTIDE SEQUENCE [LARGE SCALE GENOMIC DNA]</scope>
    <source>
        <strain>Y04AAS1</strain>
    </source>
</reference>
<comment type="function">
    <text evidence="1">Functions in the biosynthesis of branched-chain amino acids. Catalyzes the dehydration of (2R,3R)-2,3-dihydroxy-3-methylpentanoate (2,3-dihydroxy-3-methylvalerate) into 2-oxo-3-methylpentanoate (2-oxo-3-methylvalerate) and of (2R)-2,3-dihydroxy-3-methylbutanoate (2,3-dihydroxyisovalerate) into 2-oxo-3-methylbutanoate (2-oxoisovalerate), the penultimate precursor to L-isoleucine and L-valine, respectively.</text>
</comment>
<comment type="catalytic activity">
    <reaction evidence="1">
        <text>(2R)-2,3-dihydroxy-3-methylbutanoate = 3-methyl-2-oxobutanoate + H2O</text>
        <dbReference type="Rhea" id="RHEA:24809"/>
        <dbReference type="ChEBI" id="CHEBI:11851"/>
        <dbReference type="ChEBI" id="CHEBI:15377"/>
        <dbReference type="ChEBI" id="CHEBI:49072"/>
        <dbReference type="EC" id="4.2.1.9"/>
    </reaction>
    <physiologicalReaction direction="left-to-right" evidence="1">
        <dbReference type="Rhea" id="RHEA:24810"/>
    </physiologicalReaction>
</comment>
<comment type="catalytic activity">
    <reaction evidence="1">
        <text>(2R,3R)-2,3-dihydroxy-3-methylpentanoate = (S)-3-methyl-2-oxopentanoate + H2O</text>
        <dbReference type="Rhea" id="RHEA:27694"/>
        <dbReference type="ChEBI" id="CHEBI:15377"/>
        <dbReference type="ChEBI" id="CHEBI:35146"/>
        <dbReference type="ChEBI" id="CHEBI:49258"/>
        <dbReference type="EC" id="4.2.1.9"/>
    </reaction>
    <physiologicalReaction direction="left-to-right" evidence="1">
        <dbReference type="Rhea" id="RHEA:27695"/>
    </physiologicalReaction>
</comment>
<comment type="cofactor">
    <cofactor evidence="1">
        <name>[2Fe-2S] cluster</name>
        <dbReference type="ChEBI" id="CHEBI:190135"/>
    </cofactor>
    <text evidence="1">Binds 1 [2Fe-2S] cluster per subunit. This cluster acts as a Lewis acid cofactor.</text>
</comment>
<comment type="cofactor">
    <cofactor evidence="1">
        <name>Mg(2+)</name>
        <dbReference type="ChEBI" id="CHEBI:18420"/>
    </cofactor>
</comment>
<comment type="pathway">
    <text evidence="1">Amino-acid biosynthesis; L-isoleucine biosynthesis; L-isoleucine from 2-oxobutanoate: step 3/4.</text>
</comment>
<comment type="pathway">
    <text evidence="1">Amino-acid biosynthesis; L-valine biosynthesis; L-valine from pyruvate: step 3/4.</text>
</comment>
<comment type="subunit">
    <text evidence="1">Homodimer.</text>
</comment>
<comment type="similarity">
    <text evidence="1">Belongs to the IlvD/Edd family.</text>
</comment>
<organism>
    <name type="scientific">Hydrogenobaculum sp. (strain Y04AAS1)</name>
    <dbReference type="NCBI Taxonomy" id="380749"/>
    <lineage>
        <taxon>Bacteria</taxon>
        <taxon>Pseudomonadati</taxon>
        <taxon>Aquificota</taxon>
        <taxon>Aquificia</taxon>
        <taxon>Aquificales</taxon>
        <taxon>Aquificaceae</taxon>
        <taxon>Hydrogenobaculum</taxon>
    </lineage>
</organism>